<feature type="chain" id="PRO_0000139147" description="Methionine--tRNA ligase">
    <location>
        <begin position="1"/>
        <end position="706"/>
    </location>
</feature>
<feature type="domain" description="tRNA-binding" evidence="1">
    <location>
        <begin position="604"/>
        <end position="706"/>
    </location>
</feature>
<feature type="region of interest" description="Disordered" evidence="2">
    <location>
        <begin position="570"/>
        <end position="593"/>
    </location>
</feature>
<feature type="short sequence motif" description="'HIGH' region">
    <location>
        <begin position="13"/>
        <end position="23"/>
    </location>
</feature>
<feature type="short sequence motif" description="'KMSKS' region">
    <location>
        <begin position="336"/>
        <end position="340"/>
    </location>
</feature>
<feature type="binding site" evidence="1">
    <location>
        <position position="144"/>
    </location>
    <ligand>
        <name>Zn(2+)</name>
        <dbReference type="ChEBI" id="CHEBI:29105"/>
    </ligand>
</feature>
<feature type="binding site" evidence="1">
    <location>
        <position position="147"/>
    </location>
    <ligand>
        <name>Zn(2+)</name>
        <dbReference type="ChEBI" id="CHEBI:29105"/>
    </ligand>
</feature>
<feature type="binding site" evidence="1">
    <location>
        <position position="157"/>
    </location>
    <ligand>
        <name>Zn(2+)</name>
        <dbReference type="ChEBI" id="CHEBI:29105"/>
    </ligand>
</feature>
<feature type="binding site" evidence="1">
    <location>
        <position position="160"/>
    </location>
    <ligand>
        <name>Zn(2+)</name>
        <dbReference type="ChEBI" id="CHEBI:29105"/>
    </ligand>
</feature>
<feature type="binding site" evidence="1">
    <location>
        <position position="339"/>
    </location>
    <ligand>
        <name>ATP</name>
        <dbReference type="ChEBI" id="CHEBI:30616"/>
    </ligand>
</feature>
<comment type="function">
    <text evidence="1">Is required not only for elongation of protein synthesis but also for the initiation of all mRNA translation through initiator tRNA(fMet) aminoacylation.</text>
</comment>
<comment type="catalytic activity">
    <reaction evidence="1">
        <text>tRNA(Met) + L-methionine + ATP = L-methionyl-tRNA(Met) + AMP + diphosphate</text>
        <dbReference type="Rhea" id="RHEA:13481"/>
        <dbReference type="Rhea" id="RHEA-COMP:9667"/>
        <dbReference type="Rhea" id="RHEA-COMP:9698"/>
        <dbReference type="ChEBI" id="CHEBI:30616"/>
        <dbReference type="ChEBI" id="CHEBI:33019"/>
        <dbReference type="ChEBI" id="CHEBI:57844"/>
        <dbReference type="ChEBI" id="CHEBI:78442"/>
        <dbReference type="ChEBI" id="CHEBI:78530"/>
        <dbReference type="ChEBI" id="CHEBI:456215"/>
        <dbReference type="EC" id="6.1.1.10"/>
    </reaction>
</comment>
<comment type="cofactor">
    <cofactor evidence="1">
        <name>Zn(2+)</name>
        <dbReference type="ChEBI" id="CHEBI:29105"/>
    </cofactor>
    <text evidence="1">Binds 1 zinc ion per subunit.</text>
</comment>
<comment type="subunit">
    <text evidence="1">Homodimer.</text>
</comment>
<comment type="subcellular location">
    <subcellularLocation>
        <location evidence="1">Cytoplasm</location>
    </subcellularLocation>
</comment>
<comment type="similarity">
    <text evidence="1">Belongs to the class-I aminoacyl-tRNA synthetase family. MetG type 1 subfamily.</text>
</comment>
<name>SYM_NITEU</name>
<accession>Q82WP0</accession>
<reference key="1">
    <citation type="journal article" date="2003" name="J. Bacteriol.">
        <title>Complete genome sequence of the ammonia-oxidizing bacterium and obligate chemolithoautotroph Nitrosomonas europaea.</title>
        <authorList>
            <person name="Chain P."/>
            <person name="Lamerdin J.E."/>
            <person name="Larimer F.W."/>
            <person name="Regala W."/>
            <person name="Lao V."/>
            <person name="Land M.L."/>
            <person name="Hauser L."/>
            <person name="Hooper A.B."/>
            <person name="Klotz M.G."/>
            <person name="Norton J."/>
            <person name="Sayavedra-Soto L.A."/>
            <person name="Arciero D.M."/>
            <person name="Hommes N.G."/>
            <person name="Whittaker M.M."/>
            <person name="Arp D.J."/>
        </authorList>
    </citation>
    <scope>NUCLEOTIDE SEQUENCE [LARGE SCALE GENOMIC DNA]</scope>
    <source>
        <strain>ATCC 19718 / CIP 103999 / KCTC 2705 / NBRC 14298</strain>
    </source>
</reference>
<gene>
    <name evidence="1" type="primary">metG</name>
    <name type="ordered locus">NE0625</name>
</gene>
<organism>
    <name type="scientific">Nitrosomonas europaea (strain ATCC 19718 / CIP 103999 / KCTC 2705 / NBRC 14298)</name>
    <dbReference type="NCBI Taxonomy" id="228410"/>
    <lineage>
        <taxon>Bacteria</taxon>
        <taxon>Pseudomonadati</taxon>
        <taxon>Pseudomonadota</taxon>
        <taxon>Betaproteobacteria</taxon>
        <taxon>Nitrosomonadales</taxon>
        <taxon>Nitrosomonadaceae</taxon>
        <taxon>Nitrosomonas</taxon>
    </lineage>
</organism>
<keyword id="KW-0030">Aminoacyl-tRNA synthetase</keyword>
<keyword id="KW-0067">ATP-binding</keyword>
<keyword id="KW-0963">Cytoplasm</keyword>
<keyword id="KW-0436">Ligase</keyword>
<keyword id="KW-0479">Metal-binding</keyword>
<keyword id="KW-0547">Nucleotide-binding</keyword>
<keyword id="KW-0648">Protein biosynthesis</keyword>
<keyword id="KW-1185">Reference proteome</keyword>
<keyword id="KW-0694">RNA-binding</keyword>
<keyword id="KW-0820">tRNA-binding</keyword>
<keyword id="KW-0862">Zinc</keyword>
<proteinExistence type="inferred from homology"/>
<protein>
    <recommendedName>
        <fullName evidence="1">Methionine--tRNA ligase</fullName>
        <ecNumber evidence="1">6.1.1.10</ecNumber>
    </recommendedName>
    <alternativeName>
        <fullName evidence="1">Methionyl-tRNA synthetase</fullName>
        <shortName evidence="1">MetRS</shortName>
    </alternativeName>
</protein>
<evidence type="ECO:0000255" key="1">
    <source>
        <dbReference type="HAMAP-Rule" id="MF_00098"/>
    </source>
</evidence>
<evidence type="ECO:0000256" key="2">
    <source>
        <dbReference type="SAM" id="MobiDB-lite"/>
    </source>
</evidence>
<dbReference type="EC" id="6.1.1.10" evidence="1"/>
<dbReference type="EMBL" id="AL954747">
    <property type="protein sequence ID" value="CAD84536.1"/>
    <property type="molecule type" value="Genomic_DNA"/>
</dbReference>
<dbReference type="RefSeq" id="WP_011111251.1">
    <property type="nucleotide sequence ID" value="NC_004757.1"/>
</dbReference>
<dbReference type="SMR" id="Q82WP0"/>
<dbReference type="STRING" id="228410.NE0625"/>
<dbReference type="GeneID" id="87103824"/>
<dbReference type="KEGG" id="neu:NE0625"/>
<dbReference type="eggNOG" id="COG0073">
    <property type="taxonomic scope" value="Bacteria"/>
</dbReference>
<dbReference type="eggNOG" id="COG0143">
    <property type="taxonomic scope" value="Bacteria"/>
</dbReference>
<dbReference type="HOGENOM" id="CLU_009710_7_0_4"/>
<dbReference type="OrthoDB" id="9810191at2"/>
<dbReference type="PhylomeDB" id="Q82WP0"/>
<dbReference type="Proteomes" id="UP000001416">
    <property type="component" value="Chromosome"/>
</dbReference>
<dbReference type="GO" id="GO:0005829">
    <property type="term" value="C:cytosol"/>
    <property type="evidence" value="ECO:0007669"/>
    <property type="project" value="TreeGrafter"/>
</dbReference>
<dbReference type="GO" id="GO:0005524">
    <property type="term" value="F:ATP binding"/>
    <property type="evidence" value="ECO:0007669"/>
    <property type="project" value="UniProtKB-UniRule"/>
</dbReference>
<dbReference type="GO" id="GO:0046872">
    <property type="term" value="F:metal ion binding"/>
    <property type="evidence" value="ECO:0007669"/>
    <property type="project" value="UniProtKB-KW"/>
</dbReference>
<dbReference type="GO" id="GO:0004825">
    <property type="term" value="F:methionine-tRNA ligase activity"/>
    <property type="evidence" value="ECO:0007669"/>
    <property type="project" value="UniProtKB-UniRule"/>
</dbReference>
<dbReference type="GO" id="GO:0000049">
    <property type="term" value="F:tRNA binding"/>
    <property type="evidence" value="ECO:0007669"/>
    <property type="project" value="UniProtKB-KW"/>
</dbReference>
<dbReference type="GO" id="GO:0006431">
    <property type="term" value="P:methionyl-tRNA aminoacylation"/>
    <property type="evidence" value="ECO:0007669"/>
    <property type="project" value="UniProtKB-UniRule"/>
</dbReference>
<dbReference type="CDD" id="cd07957">
    <property type="entry name" value="Anticodon_Ia_Met"/>
    <property type="match status" value="1"/>
</dbReference>
<dbReference type="CDD" id="cd00814">
    <property type="entry name" value="MetRS_core"/>
    <property type="match status" value="1"/>
</dbReference>
<dbReference type="CDD" id="cd02800">
    <property type="entry name" value="tRNA_bind_EcMetRS_like"/>
    <property type="match status" value="1"/>
</dbReference>
<dbReference type="FunFam" id="2.20.28.20:FF:000001">
    <property type="entry name" value="Methionine--tRNA ligase"/>
    <property type="match status" value="1"/>
</dbReference>
<dbReference type="FunFam" id="2.40.50.140:FF:000042">
    <property type="entry name" value="Methionine--tRNA ligase"/>
    <property type="match status" value="1"/>
</dbReference>
<dbReference type="Gene3D" id="3.40.50.620">
    <property type="entry name" value="HUPs"/>
    <property type="match status" value="1"/>
</dbReference>
<dbReference type="Gene3D" id="1.10.730.10">
    <property type="entry name" value="Isoleucyl-tRNA Synthetase, Domain 1"/>
    <property type="match status" value="1"/>
</dbReference>
<dbReference type="Gene3D" id="2.20.28.20">
    <property type="entry name" value="Methionyl-tRNA synthetase, Zn-domain"/>
    <property type="match status" value="1"/>
</dbReference>
<dbReference type="Gene3D" id="2.40.50.140">
    <property type="entry name" value="Nucleic acid-binding proteins"/>
    <property type="match status" value="1"/>
</dbReference>
<dbReference type="HAMAP" id="MF_00098">
    <property type="entry name" value="Met_tRNA_synth_type1"/>
    <property type="match status" value="1"/>
</dbReference>
<dbReference type="InterPro" id="IPR001412">
    <property type="entry name" value="aa-tRNA-synth_I_CS"/>
</dbReference>
<dbReference type="InterPro" id="IPR041872">
    <property type="entry name" value="Anticodon_Met"/>
</dbReference>
<dbReference type="InterPro" id="IPR004495">
    <property type="entry name" value="Met-tRNA-synth_bsu_C"/>
</dbReference>
<dbReference type="InterPro" id="IPR023458">
    <property type="entry name" value="Met-tRNA_ligase_1"/>
</dbReference>
<dbReference type="InterPro" id="IPR014758">
    <property type="entry name" value="Met-tRNA_synth"/>
</dbReference>
<dbReference type="InterPro" id="IPR015413">
    <property type="entry name" value="Methionyl/Leucyl_tRNA_Synth"/>
</dbReference>
<dbReference type="InterPro" id="IPR033911">
    <property type="entry name" value="MetRS_core"/>
</dbReference>
<dbReference type="InterPro" id="IPR029038">
    <property type="entry name" value="MetRS_Zn"/>
</dbReference>
<dbReference type="InterPro" id="IPR012340">
    <property type="entry name" value="NA-bd_OB-fold"/>
</dbReference>
<dbReference type="InterPro" id="IPR014729">
    <property type="entry name" value="Rossmann-like_a/b/a_fold"/>
</dbReference>
<dbReference type="InterPro" id="IPR002547">
    <property type="entry name" value="tRNA-bd_dom"/>
</dbReference>
<dbReference type="InterPro" id="IPR009080">
    <property type="entry name" value="tRNAsynth_Ia_anticodon-bd"/>
</dbReference>
<dbReference type="NCBIfam" id="TIGR00398">
    <property type="entry name" value="metG"/>
    <property type="match status" value="1"/>
</dbReference>
<dbReference type="NCBIfam" id="TIGR00399">
    <property type="entry name" value="metG_C_term"/>
    <property type="match status" value="1"/>
</dbReference>
<dbReference type="NCBIfam" id="NF001100">
    <property type="entry name" value="PRK00133.1"/>
    <property type="match status" value="1"/>
</dbReference>
<dbReference type="PANTHER" id="PTHR45765">
    <property type="entry name" value="METHIONINE--TRNA LIGASE"/>
    <property type="match status" value="1"/>
</dbReference>
<dbReference type="PANTHER" id="PTHR45765:SF1">
    <property type="entry name" value="METHIONINE--TRNA LIGASE, CYTOPLASMIC"/>
    <property type="match status" value="1"/>
</dbReference>
<dbReference type="Pfam" id="PF19303">
    <property type="entry name" value="Anticodon_3"/>
    <property type="match status" value="1"/>
</dbReference>
<dbReference type="Pfam" id="PF09334">
    <property type="entry name" value="tRNA-synt_1g"/>
    <property type="match status" value="1"/>
</dbReference>
<dbReference type="Pfam" id="PF01588">
    <property type="entry name" value="tRNA_bind"/>
    <property type="match status" value="1"/>
</dbReference>
<dbReference type="PRINTS" id="PR01041">
    <property type="entry name" value="TRNASYNTHMET"/>
</dbReference>
<dbReference type="SUPFAM" id="SSF47323">
    <property type="entry name" value="Anticodon-binding domain of a subclass of class I aminoacyl-tRNA synthetases"/>
    <property type="match status" value="1"/>
</dbReference>
<dbReference type="SUPFAM" id="SSF57770">
    <property type="entry name" value="Methionyl-tRNA synthetase (MetRS), Zn-domain"/>
    <property type="match status" value="1"/>
</dbReference>
<dbReference type="SUPFAM" id="SSF50249">
    <property type="entry name" value="Nucleic acid-binding proteins"/>
    <property type="match status" value="1"/>
</dbReference>
<dbReference type="SUPFAM" id="SSF52374">
    <property type="entry name" value="Nucleotidylyl transferase"/>
    <property type="match status" value="1"/>
</dbReference>
<dbReference type="PROSITE" id="PS00178">
    <property type="entry name" value="AA_TRNA_LIGASE_I"/>
    <property type="match status" value="1"/>
</dbReference>
<dbReference type="PROSITE" id="PS50886">
    <property type="entry name" value="TRBD"/>
    <property type="match status" value="1"/>
</dbReference>
<sequence>MTIRNILVTSALPYANGSIHLGHLVEYIQTDIWVRFQKMQGHTVYYVCADDTHGTPVMLRAEKEGISPEALIARVHAEHLRDFTGFHIAFDQYYSTHSDETRYYAEDIYRKLKEAGLIAVRAIEQLYDPIKNLFLPDRFVKGECPKCGAAEQYGDSCEACGAAYTPTELKNPYSAVSGATPVRKTSEHFFFKLSDSRCADFLRRWTHEGNHLQAEAANKMAEWLGEAGENKLSDWDISRDAPYFGFEIPGETGKYFYVWLDAPIGYMGSFKKLCARKGIDFDAYWKKDSTTELYHFIGKDILYFHALFWPAMLENAGYRTPTQIFAHGFLTVNGEKMSKSRGTFITAESYLEQGLNPEWLRYYYAAKLNGSMEDIDLNLDDFVARVNSDLVGKYINIASRCAGFISKRFGGKLVSGEDYRLLQQMVDEHFAGWQPGVIEAAYEARDFSAAVRHIMRRADEVNELIHELAPWEIARDETRERELHRACSLGIQMFYLLSCYLKPILPRTAAQIEDFLNLGELSWQKQQAGQPLSDTLLPPGHVINPYQHLMTRIDPKQITALITANQQTMQQTMNTETESHSPQRHGQAQQHPVAPIAETISIEDFVKIDLRIARIVDAQHVPGADKLLQLTLDIGSEQRTVFAGIKSAYDPEQLKGRLTVMVANLAPRKMKFGLSEGMVLAASGENGGGPFLLAPDSGAQPGMRVK</sequence>